<comment type="function">
    <text evidence="1">Located at the top of the head of the 30S subunit, it contacts several helices of the 16S rRNA. In the 70S ribosome it contacts the 23S rRNA (bridge B1a) and protein L5 of the 50S subunit (bridge B1b), connecting the 2 subunits; these bridges are implicated in subunit movement. Contacts the tRNAs in the A and P-sites.</text>
</comment>
<comment type="subunit">
    <text evidence="1">Part of the 30S ribosomal subunit. Forms a loose heterodimer with protein S19. Forms two bridges to the 50S subunit in the 70S ribosome.</text>
</comment>
<comment type="similarity">
    <text evidence="1">Belongs to the universal ribosomal protein uS13 family.</text>
</comment>
<name>RS13_DESDA</name>
<evidence type="ECO:0000255" key="1">
    <source>
        <dbReference type="HAMAP-Rule" id="MF_01315"/>
    </source>
</evidence>
<evidence type="ECO:0000256" key="2">
    <source>
        <dbReference type="SAM" id="MobiDB-lite"/>
    </source>
</evidence>
<evidence type="ECO:0000305" key="3"/>
<keyword id="KW-0687">Ribonucleoprotein</keyword>
<keyword id="KW-0689">Ribosomal protein</keyword>
<keyword id="KW-0694">RNA-binding</keyword>
<keyword id="KW-0699">rRNA-binding</keyword>
<keyword id="KW-0820">tRNA-binding</keyword>
<reference key="1">
    <citation type="submission" date="2009-01" db="EMBL/GenBank/DDBJ databases">
        <title>Complete sequence of Desulfovibrio desulfuricans subsp. desulfuricans str. ATCC 27774.</title>
        <authorList>
            <consortium name="US DOE Joint Genome Institute"/>
            <person name="Lucas S."/>
            <person name="Copeland A."/>
            <person name="Lapidus A."/>
            <person name="Glavina del Rio T."/>
            <person name="Tice H."/>
            <person name="Bruce D."/>
            <person name="Goodwin L."/>
            <person name="Pitluck S."/>
            <person name="Sims D."/>
            <person name="Lu M."/>
            <person name="Kiss H."/>
            <person name="Meineke L."/>
            <person name="Brettin T."/>
            <person name="Detter J.C."/>
            <person name="Han C."/>
            <person name="Larimer F."/>
            <person name="Land M."/>
            <person name="Hauser L."/>
            <person name="Kyrpides N."/>
            <person name="Ovchinnikova G."/>
            <person name="Hazen T.C."/>
        </authorList>
    </citation>
    <scope>NUCLEOTIDE SEQUENCE [LARGE SCALE GENOMIC DNA]</scope>
    <source>
        <strain>ATCC 27774 / DSM 6949 / MB</strain>
    </source>
</reference>
<proteinExistence type="inferred from homology"/>
<protein>
    <recommendedName>
        <fullName evidence="1">Small ribosomal subunit protein uS13</fullName>
    </recommendedName>
    <alternativeName>
        <fullName evidence="3">30S ribosomal protein S13</fullName>
    </alternativeName>
</protein>
<dbReference type="EMBL" id="CP001358">
    <property type="protein sequence ID" value="ACL48591.1"/>
    <property type="molecule type" value="Genomic_DNA"/>
</dbReference>
<dbReference type="SMR" id="B8IYL4"/>
<dbReference type="STRING" id="525146.Ddes_0683"/>
<dbReference type="KEGG" id="dds:Ddes_0683"/>
<dbReference type="eggNOG" id="COG0099">
    <property type="taxonomic scope" value="Bacteria"/>
</dbReference>
<dbReference type="HOGENOM" id="CLU_103849_1_2_7"/>
<dbReference type="GO" id="GO:0005829">
    <property type="term" value="C:cytosol"/>
    <property type="evidence" value="ECO:0007669"/>
    <property type="project" value="TreeGrafter"/>
</dbReference>
<dbReference type="GO" id="GO:0015935">
    <property type="term" value="C:small ribosomal subunit"/>
    <property type="evidence" value="ECO:0007669"/>
    <property type="project" value="TreeGrafter"/>
</dbReference>
<dbReference type="GO" id="GO:0019843">
    <property type="term" value="F:rRNA binding"/>
    <property type="evidence" value="ECO:0007669"/>
    <property type="project" value="UniProtKB-UniRule"/>
</dbReference>
<dbReference type="GO" id="GO:0003735">
    <property type="term" value="F:structural constituent of ribosome"/>
    <property type="evidence" value="ECO:0007669"/>
    <property type="project" value="InterPro"/>
</dbReference>
<dbReference type="GO" id="GO:0000049">
    <property type="term" value="F:tRNA binding"/>
    <property type="evidence" value="ECO:0007669"/>
    <property type="project" value="UniProtKB-UniRule"/>
</dbReference>
<dbReference type="GO" id="GO:0006412">
    <property type="term" value="P:translation"/>
    <property type="evidence" value="ECO:0007669"/>
    <property type="project" value="UniProtKB-UniRule"/>
</dbReference>
<dbReference type="FunFam" id="1.10.8.50:FF:000001">
    <property type="entry name" value="30S ribosomal protein S13"/>
    <property type="match status" value="1"/>
</dbReference>
<dbReference type="FunFam" id="4.10.910.10:FF:000001">
    <property type="entry name" value="30S ribosomal protein S13"/>
    <property type="match status" value="1"/>
</dbReference>
<dbReference type="Gene3D" id="1.10.8.50">
    <property type="match status" value="1"/>
</dbReference>
<dbReference type="Gene3D" id="4.10.910.10">
    <property type="entry name" value="30s ribosomal protein s13, domain 2"/>
    <property type="match status" value="1"/>
</dbReference>
<dbReference type="HAMAP" id="MF_01315">
    <property type="entry name" value="Ribosomal_uS13"/>
    <property type="match status" value="1"/>
</dbReference>
<dbReference type="InterPro" id="IPR027437">
    <property type="entry name" value="Rbsml_uS13_C"/>
</dbReference>
<dbReference type="InterPro" id="IPR001892">
    <property type="entry name" value="Ribosomal_uS13"/>
</dbReference>
<dbReference type="InterPro" id="IPR010979">
    <property type="entry name" value="Ribosomal_uS13-like_H2TH"/>
</dbReference>
<dbReference type="InterPro" id="IPR019980">
    <property type="entry name" value="Ribosomal_uS13_bac-type"/>
</dbReference>
<dbReference type="InterPro" id="IPR018269">
    <property type="entry name" value="Ribosomal_uS13_CS"/>
</dbReference>
<dbReference type="NCBIfam" id="TIGR03631">
    <property type="entry name" value="uS13_bact"/>
    <property type="match status" value="1"/>
</dbReference>
<dbReference type="PANTHER" id="PTHR10871">
    <property type="entry name" value="30S RIBOSOMAL PROTEIN S13/40S RIBOSOMAL PROTEIN S18"/>
    <property type="match status" value="1"/>
</dbReference>
<dbReference type="PANTHER" id="PTHR10871:SF1">
    <property type="entry name" value="SMALL RIBOSOMAL SUBUNIT PROTEIN US13M"/>
    <property type="match status" value="1"/>
</dbReference>
<dbReference type="Pfam" id="PF00416">
    <property type="entry name" value="Ribosomal_S13"/>
    <property type="match status" value="1"/>
</dbReference>
<dbReference type="PIRSF" id="PIRSF002134">
    <property type="entry name" value="Ribosomal_S13"/>
    <property type="match status" value="1"/>
</dbReference>
<dbReference type="SUPFAM" id="SSF46946">
    <property type="entry name" value="S13-like H2TH domain"/>
    <property type="match status" value="1"/>
</dbReference>
<dbReference type="PROSITE" id="PS00646">
    <property type="entry name" value="RIBOSOMAL_S13_1"/>
    <property type="match status" value="1"/>
</dbReference>
<dbReference type="PROSITE" id="PS50159">
    <property type="entry name" value="RIBOSOMAL_S13_2"/>
    <property type="match status" value="1"/>
</dbReference>
<feature type="chain" id="PRO_1000165618" description="Small ribosomal subunit protein uS13">
    <location>
        <begin position="1"/>
        <end position="122"/>
    </location>
</feature>
<feature type="region of interest" description="Disordered" evidence="2">
    <location>
        <begin position="95"/>
        <end position="122"/>
    </location>
</feature>
<sequence length="122" mass="13922">MARIAGVDLPRGKRVDIALTYIYGIGRTTAMKILDTTGVNWERSIDDLSADEVNEIRKELEQHYKVEGDLRREVSSNIKRLMDIGCYRGLRHRRGLPVHGQRTHTNARTRKGPRRGAVGKKK</sequence>
<organism>
    <name type="scientific">Desulfovibrio desulfuricans (strain ATCC 27774 / DSM 6949 / MB)</name>
    <dbReference type="NCBI Taxonomy" id="525146"/>
    <lineage>
        <taxon>Bacteria</taxon>
        <taxon>Pseudomonadati</taxon>
        <taxon>Thermodesulfobacteriota</taxon>
        <taxon>Desulfovibrionia</taxon>
        <taxon>Desulfovibrionales</taxon>
        <taxon>Desulfovibrionaceae</taxon>
        <taxon>Desulfovibrio</taxon>
    </lineage>
</organism>
<gene>
    <name evidence="1" type="primary">rpsM</name>
    <name type="ordered locus">Ddes_0683</name>
</gene>
<accession>B8IYL4</accession>